<dbReference type="EMBL" id="AY958085">
    <property type="protein sequence ID" value="AAX45757.1"/>
    <property type="molecule type" value="Genomic_DNA"/>
</dbReference>
<dbReference type="RefSeq" id="YP_636395.1">
    <property type="nucleotide sequence ID" value="NC_008116.1"/>
</dbReference>
<dbReference type="SMR" id="Q32RY1"/>
<dbReference type="GeneID" id="4108631"/>
<dbReference type="GO" id="GO:0009507">
    <property type="term" value="C:chloroplast"/>
    <property type="evidence" value="ECO:0007669"/>
    <property type="project" value="UniProtKB-SubCell"/>
</dbReference>
<dbReference type="GO" id="GO:0005763">
    <property type="term" value="C:mitochondrial small ribosomal subunit"/>
    <property type="evidence" value="ECO:0007669"/>
    <property type="project" value="TreeGrafter"/>
</dbReference>
<dbReference type="GO" id="GO:0003735">
    <property type="term" value="F:structural constituent of ribosome"/>
    <property type="evidence" value="ECO:0007669"/>
    <property type="project" value="InterPro"/>
</dbReference>
<dbReference type="GO" id="GO:0006412">
    <property type="term" value="P:translation"/>
    <property type="evidence" value="ECO:0007669"/>
    <property type="project" value="UniProtKB-UniRule"/>
</dbReference>
<dbReference type="CDD" id="cd01425">
    <property type="entry name" value="RPS2"/>
    <property type="match status" value="1"/>
</dbReference>
<dbReference type="FunFam" id="1.10.287.610:FF:000001">
    <property type="entry name" value="30S ribosomal protein S2"/>
    <property type="match status" value="1"/>
</dbReference>
<dbReference type="Gene3D" id="3.40.50.10490">
    <property type="entry name" value="Glucose-6-phosphate isomerase like protein, domain 1"/>
    <property type="match status" value="1"/>
</dbReference>
<dbReference type="Gene3D" id="1.10.287.610">
    <property type="entry name" value="Helix hairpin bin"/>
    <property type="match status" value="1"/>
</dbReference>
<dbReference type="HAMAP" id="MF_00291_B">
    <property type="entry name" value="Ribosomal_uS2_B"/>
    <property type="match status" value="1"/>
</dbReference>
<dbReference type="InterPro" id="IPR001865">
    <property type="entry name" value="Ribosomal_uS2"/>
</dbReference>
<dbReference type="InterPro" id="IPR005706">
    <property type="entry name" value="Ribosomal_uS2_bac/mit/plastid"/>
</dbReference>
<dbReference type="InterPro" id="IPR018130">
    <property type="entry name" value="Ribosomal_uS2_CS"/>
</dbReference>
<dbReference type="InterPro" id="IPR023591">
    <property type="entry name" value="Ribosomal_uS2_flav_dom_sf"/>
</dbReference>
<dbReference type="NCBIfam" id="TIGR01011">
    <property type="entry name" value="rpsB_bact"/>
    <property type="match status" value="1"/>
</dbReference>
<dbReference type="PANTHER" id="PTHR12534">
    <property type="entry name" value="30S RIBOSOMAL PROTEIN S2 PROKARYOTIC AND ORGANELLAR"/>
    <property type="match status" value="1"/>
</dbReference>
<dbReference type="PANTHER" id="PTHR12534:SF0">
    <property type="entry name" value="SMALL RIBOSOMAL SUBUNIT PROTEIN US2M"/>
    <property type="match status" value="1"/>
</dbReference>
<dbReference type="Pfam" id="PF00318">
    <property type="entry name" value="Ribosomal_S2"/>
    <property type="match status" value="1"/>
</dbReference>
<dbReference type="PRINTS" id="PR00395">
    <property type="entry name" value="RIBOSOMALS2"/>
</dbReference>
<dbReference type="SUPFAM" id="SSF52313">
    <property type="entry name" value="Ribosomal protein S2"/>
    <property type="match status" value="1"/>
</dbReference>
<dbReference type="PROSITE" id="PS00962">
    <property type="entry name" value="RIBOSOMAL_S2_1"/>
    <property type="match status" value="1"/>
</dbReference>
<dbReference type="PROSITE" id="PS00963">
    <property type="entry name" value="RIBOSOMAL_S2_2"/>
    <property type="match status" value="1"/>
</dbReference>
<sequence length="233" mass="26448">MKTESLTISLEEMMEAGVHFGHQTRKWNPKMAPYIFTKRRGIYILHIFKTARLLAEACEFSANAASQGKQFLIVGTKYQAADLVSAAAKKARCHYVNQKWLGGMLTNWSTIETRVTRLKQLEDQENAGVLNQLPKKEAAVLKRQLIQLRKYLEGIKYMTRLPDIVIIIDQQKEATAVEECIKLGIPTICLVDTDCDPDLTDMPIPANDDARSSIRWILDKLTTAIREGRNRVT</sequence>
<keyword id="KW-0150">Chloroplast</keyword>
<keyword id="KW-0934">Plastid</keyword>
<keyword id="KW-0687">Ribonucleoprotein</keyword>
<keyword id="KW-0689">Ribosomal protein</keyword>
<protein>
    <recommendedName>
        <fullName evidence="1">Small ribosomal subunit protein uS2c</fullName>
    </recommendedName>
    <alternativeName>
        <fullName>30S ribosomal protein S2, chloroplastic</fullName>
    </alternativeName>
</protein>
<feature type="chain" id="PRO_0000352160" description="Small ribosomal subunit protein uS2c">
    <location>
        <begin position="1"/>
        <end position="233"/>
    </location>
</feature>
<organism>
    <name type="scientific">Staurastrum punctulatum</name>
    <name type="common">Green alga</name>
    <name type="synonym">Cosmoastrum punctulatum</name>
    <dbReference type="NCBI Taxonomy" id="102822"/>
    <lineage>
        <taxon>Eukaryota</taxon>
        <taxon>Viridiplantae</taxon>
        <taxon>Streptophyta</taxon>
        <taxon>Zygnematophyceae</taxon>
        <taxon>Zygnematophycidae</taxon>
        <taxon>Desmidiales</taxon>
        <taxon>Desmidiaceae</taxon>
        <taxon>Staurastrum</taxon>
    </lineage>
</organism>
<proteinExistence type="inferred from homology"/>
<comment type="subcellular location">
    <subcellularLocation>
        <location>Plastid</location>
        <location>Chloroplast</location>
    </subcellularLocation>
</comment>
<comment type="similarity">
    <text evidence="1">Belongs to the universal ribosomal protein uS2 family.</text>
</comment>
<geneLocation type="chloroplast"/>
<accession>Q32RY1</accession>
<evidence type="ECO:0000305" key="1"/>
<name>RR2_STAPU</name>
<reference key="1">
    <citation type="journal article" date="2005" name="BMC Biol.">
        <title>The complete chloroplast DNA sequences of the charophycean green algae Staurastrum and Zygnema reveal that the chloroplast genome underwent extensive changes during the evolution of the Zygnematales.</title>
        <authorList>
            <person name="Turmel M."/>
            <person name="Otis C."/>
            <person name="Lemieux C."/>
        </authorList>
    </citation>
    <scope>NUCLEOTIDE SEQUENCE [LARGE SCALE GENOMIC DNA]</scope>
</reference>
<gene>
    <name type="primary">rps2</name>
</gene>